<name>HBB2_ANAMI</name>
<keyword id="KW-0903">Direct protein sequencing</keyword>
<keyword id="KW-0349">Heme</keyword>
<keyword id="KW-0408">Iron</keyword>
<keyword id="KW-0479">Metal-binding</keyword>
<keyword id="KW-0561">Oxygen transport</keyword>
<keyword id="KW-0813">Transport</keyword>
<feature type="chain" id="PRO_0000052867" description="Hemoglobin subunit beta-2">
    <location>
        <begin position="1"/>
        <end position="146"/>
    </location>
</feature>
<feature type="domain" description="Globin" evidence="1">
    <location>
        <begin position="2"/>
        <end position="146"/>
    </location>
</feature>
<feature type="binding site" description="distal binding residue" evidence="1">
    <location>
        <position position="63"/>
    </location>
    <ligand>
        <name>heme b</name>
        <dbReference type="ChEBI" id="CHEBI:60344"/>
    </ligand>
    <ligandPart>
        <name>Fe</name>
        <dbReference type="ChEBI" id="CHEBI:18248"/>
    </ligandPart>
</feature>
<feature type="binding site" description="proximal binding residue" evidence="1">
    <location>
        <position position="92"/>
    </location>
    <ligand>
        <name>heme b</name>
        <dbReference type="ChEBI" id="CHEBI:60344"/>
    </ligand>
    <ligandPart>
        <name>Fe</name>
        <dbReference type="ChEBI" id="CHEBI:18248"/>
    </ligandPart>
</feature>
<evidence type="ECO:0000255" key="1">
    <source>
        <dbReference type="PROSITE-ProRule" id="PRU00238"/>
    </source>
</evidence>
<evidence type="ECO:0000269" key="2">
    <source>
    </source>
</evidence>
<proteinExistence type="evidence at protein level"/>
<protein>
    <recommendedName>
        <fullName>Hemoglobin subunit beta-2</fullName>
    </recommendedName>
    <alternativeName>
        <fullName>Beta-2-globin</fullName>
    </alternativeName>
    <alternativeName>
        <fullName>Hemoglobin beta-2 chain</fullName>
    </alternativeName>
</protein>
<gene>
    <name type="primary">hbb2</name>
</gene>
<organism>
    <name type="scientific">Anarhichas minor</name>
    <name type="common">Arctic spotted wolffish</name>
    <dbReference type="NCBI Taxonomy" id="65739"/>
    <lineage>
        <taxon>Eukaryota</taxon>
        <taxon>Metazoa</taxon>
        <taxon>Chordata</taxon>
        <taxon>Craniata</taxon>
        <taxon>Vertebrata</taxon>
        <taxon>Euteleostomi</taxon>
        <taxon>Actinopterygii</taxon>
        <taxon>Neopterygii</taxon>
        <taxon>Teleostei</taxon>
        <taxon>Neoteleostei</taxon>
        <taxon>Acanthomorphata</taxon>
        <taxon>Eupercaria</taxon>
        <taxon>Perciformes</taxon>
        <taxon>Cottioidei</taxon>
        <taxon>Zoarcales</taxon>
        <taxon>Anarhichadidae</taxon>
        <taxon>Anarhichas</taxon>
    </lineage>
</organism>
<sequence length="146" mass="16289">VEWTDFERATIQDIFSKMDYEVVGPAALSRCLIVYPWTQRYFGSFGNLYNAAAIMGNPNVAKHGTIILHGLDRGVKNMDNIKETYAELSVLHSEKLHVDPDNFKLISDCLTVVVAAQFGKAFTGEVQAAFQKFMAVVVSALGRQYH</sequence>
<dbReference type="SMR" id="P83273"/>
<dbReference type="GO" id="GO:0072562">
    <property type="term" value="C:blood microparticle"/>
    <property type="evidence" value="ECO:0007669"/>
    <property type="project" value="TreeGrafter"/>
</dbReference>
<dbReference type="GO" id="GO:0031838">
    <property type="term" value="C:haptoglobin-hemoglobin complex"/>
    <property type="evidence" value="ECO:0007669"/>
    <property type="project" value="TreeGrafter"/>
</dbReference>
<dbReference type="GO" id="GO:0005833">
    <property type="term" value="C:hemoglobin complex"/>
    <property type="evidence" value="ECO:0007669"/>
    <property type="project" value="InterPro"/>
</dbReference>
<dbReference type="GO" id="GO:0031720">
    <property type="term" value="F:haptoglobin binding"/>
    <property type="evidence" value="ECO:0007669"/>
    <property type="project" value="TreeGrafter"/>
</dbReference>
<dbReference type="GO" id="GO:0020037">
    <property type="term" value="F:heme binding"/>
    <property type="evidence" value="ECO:0007669"/>
    <property type="project" value="InterPro"/>
</dbReference>
<dbReference type="GO" id="GO:0046872">
    <property type="term" value="F:metal ion binding"/>
    <property type="evidence" value="ECO:0007669"/>
    <property type="project" value="UniProtKB-KW"/>
</dbReference>
<dbReference type="GO" id="GO:0043177">
    <property type="term" value="F:organic acid binding"/>
    <property type="evidence" value="ECO:0007669"/>
    <property type="project" value="TreeGrafter"/>
</dbReference>
<dbReference type="GO" id="GO:0019825">
    <property type="term" value="F:oxygen binding"/>
    <property type="evidence" value="ECO:0007669"/>
    <property type="project" value="InterPro"/>
</dbReference>
<dbReference type="GO" id="GO:0005344">
    <property type="term" value="F:oxygen carrier activity"/>
    <property type="evidence" value="ECO:0007669"/>
    <property type="project" value="UniProtKB-KW"/>
</dbReference>
<dbReference type="GO" id="GO:0004601">
    <property type="term" value="F:peroxidase activity"/>
    <property type="evidence" value="ECO:0007669"/>
    <property type="project" value="TreeGrafter"/>
</dbReference>
<dbReference type="GO" id="GO:0042744">
    <property type="term" value="P:hydrogen peroxide catabolic process"/>
    <property type="evidence" value="ECO:0007669"/>
    <property type="project" value="TreeGrafter"/>
</dbReference>
<dbReference type="CDD" id="cd08925">
    <property type="entry name" value="Hb-beta-like"/>
    <property type="match status" value="1"/>
</dbReference>
<dbReference type="FunFam" id="1.10.490.10:FF:000001">
    <property type="entry name" value="Hemoglobin subunit beta"/>
    <property type="match status" value="1"/>
</dbReference>
<dbReference type="Gene3D" id="1.10.490.10">
    <property type="entry name" value="Globins"/>
    <property type="match status" value="1"/>
</dbReference>
<dbReference type="InterPro" id="IPR000971">
    <property type="entry name" value="Globin"/>
</dbReference>
<dbReference type="InterPro" id="IPR009050">
    <property type="entry name" value="Globin-like_sf"/>
</dbReference>
<dbReference type="InterPro" id="IPR012292">
    <property type="entry name" value="Globin/Proto"/>
</dbReference>
<dbReference type="InterPro" id="IPR002337">
    <property type="entry name" value="Hemoglobin_b"/>
</dbReference>
<dbReference type="InterPro" id="IPR050056">
    <property type="entry name" value="Hemoglobin_oxygen_transport"/>
</dbReference>
<dbReference type="PANTHER" id="PTHR11442">
    <property type="entry name" value="HEMOGLOBIN FAMILY MEMBER"/>
    <property type="match status" value="1"/>
</dbReference>
<dbReference type="PANTHER" id="PTHR11442:SF7">
    <property type="entry name" value="HEMOGLOBIN SUBUNIT EPSILON"/>
    <property type="match status" value="1"/>
</dbReference>
<dbReference type="Pfam" id="PF00042">
    <property type="entry name" value="Globin"/>
    <property type="match status" value="1"/>
</dbReference>
<dbReference type="PRINTS" id="PR00814">
    <property type="entry name" value="BETAHAEM"/>
</dbReference>
<dbReference type="SUPFAM" id="SSF46458">
    <property type="entry name" value="Globin-like"/>
    <property type="match status" value="1"/>
</dbReference>
<dbReference type="PROSITE" id="PS01033">
    <property type="entry name" value="GLOBIN"/>
    <property type="match status" value="1"/>
</dbReference>
<accession>P83273</accession>
<comment type="function">
    <text evidence="2">Involved in oxygen transport from gills to the various peripheral tissues.</text>
</comment>
<comment type="subunit">
    <text>Hb3 is a heterotetramer of two alpha-2 chains and two beta-2 chains.</text>
</comment>
<comment type="tissue specificity">
    <text evidence="2">Red blood cells.</text>
</comment>
<comment type="miscellaneous">
    <text>Hb3 displays pronounced Bohr and root effects, accompanied by strong organophosphate regulation.</text>
</comment>
<comment type="similarity">
    <text evidence="1">Belongs to the globin family.</text>
</comment>
<reference key="1">
    <citation type="journal article" date="2002" name="J. Biol. Chem.">
        <title>The functionally distinct hemoglobins of the Arctic spotted wolffish Anarhichas minor.</title>
        <authorList>
            <person name="Verde C."/>
            <person name="Carratore V."/>
            <person name="Riccio A."/>
            <person name="Tamburrini M."/>
            <person name="Parisi E."/>
            <person name="Di Prisco G."/>
        </authorList>
    </citation>
    <scope>PROTEIN SEQUENCE</scope>
    <scope>FUNCTION</scope>
    <scope>TISSUE SPECIFICITY</scope>
</reference>